<accession>P52696</accession>
<accession>P75761</accession>
<evidence type="ECO:0000255" key="1">
    <source>
        <dbReference type="PROSITE-ProRule" id="PRU00253"/>
    </source>
</evidence>
<evidence type="ECO:0000305" key="2"/>
<sequence>MKHELSSMKAFVILAESSSFNNAAKLLNITQPALTRRIKKMEEDLHVQLFERTTRKVTLTKAGKRLLPEARELIKKFDETLFNIRDMNAYHRGMVTLACIPTAVFYFLPLAIGKFNELYPNIKVRILEQGTNNCMESVLCNESDFGINMNNVTNSSIDFTPLVNEPFVLACRRDHPLAKKQLVEWQELVGYKMIGVRSSSGNRLLIEQQLADKPWKLDWFYEVRHLSTSLGLVEAGLGISALPGLAMPHAPYSSIIGIPLVEPVIRRTLGIIRRKDAVLSPAAERFFALLINLWTDDKDNLWTNIVERQRHALQEIG</sequence>
<gene>
    <name type="primary">ybhD</name>
    <name type="ordered locus">b0768</name>
    <name type="ordered locus">JW5896</name>
</gene>
<name>YBHD_ECOLI</name>
<organism>
    <name type="scientific">Escherichia coli (strain K12)</name>
    <dbReference type="NCBI Taxonomy" id="83333"/>
    <lineage>
        <taxon>Bacteria</taxon>
        <taxon>Pseudomonadati</taxon>
        <taxon>Pseudomonadota</taxon>
        <taxon>Gammaproteobacteria</taxon>
        <taxon>Enterobacterales</taxon>
        <taxon>Enterobacteriaceae</taxon>
        <taxon>Escherichia</taxon>
    </lineage>
</organism>
<feature type="chain" id="PRO_0000105780" description="Uncharacterized HTH-type transcriptional regulator YbhD">
    <location>
        <begin position="1"/>
        <end position="317"/>
    </location>
</feature>
<feature type="domain" description="HTH lysR-type" evidence="1">
    <location>
        <begin position="1"/>
        <end position="60"/>
    </location>
</feature>
<feature type="DNA-binding region" description="H-T-H motif" evidence="1">
    <location>
        <begin position="20"/>
        <end position="40"/>
    </location>
</feature>
<comment type="similarity">
    <text evidence="2">Belongs to the LysR transcriptional regulatory family.</text>
</comment>
<comment type="sequence caution" evidence="2">
    <conflict type="erroneous initiation">
        <sequence resource="EMBL-CDS" id="BAA35432"/>
    </conflict>
</comment>
<reference key="1">
    <citation type="journal article" date="1996" name="DNA Res.">
        <title>A 718-kb DNA sequence of the Escherichia coli K-12 genome corresponding to the 12.7-28.0 min region on the linkage map.</title>
        <authorList>
            <person name="Oshima T."/>
            <person name="Aiba H."/>
            <person name="Baba T."/>
            <person name="Fujita K."/>
            <person name="Hayashi K."/>
            <person name="Honjo A."/>
            <person name="Ikemoto K."/>
            <person name="Inada T."/>
            <person name="Itoh T."/>
            <person name="Kajihara M."/>
            <person name="Kanai K."/>
            <person name="Kashimoto K."/>
            <person name="Kimura S."/>
            <person name="Kitagawa M."/>
            <person name="Makino K."/>
            <person name="Masuda S."/>
            <person name="Miki T."/>
            <person name="Mizobuchi K."/>
            <person name="Mori H."/>
            <person name="Motomura K."/>
            <person name="Nakamura Y."/>
            <person name="Nashimoto H."/>
            <person name="Nishio Y."/>
            <person name="Saito N."/>
            <person name="Sampei G."/>
            <person name="Seki Y."/>
            <person name="Tagami H."/>
            <person name="Takemoto K."/>
            <person name="Wada C."/>
            <person name="Yamamoto Y."/>
            <person name="Yano M."/>
            <person name="Horiuchi T."/>
        </authorList>
    </citation>
    <scope>NUCLEOTIDE SEQUENCE [LARGE SCALE GENOMIC DNA]</scope>
    <source>
        <strain>K12 / W3110 / ATCC 27325 / DSM 5911</strain>
    </source>
</reference>
<reference key="2">
    <citation type="journal article" date="1997" name="Science">
        <title>The complete genome sequence of Escherichia coli K-12.</title>
        <authorList>
            <person name="Blattner F.R."/>
            <person name="Plunkett G. III"/>
            <person name="Bloch C.A."/>
            <person name="Perna N.T."/>
            <person name="Burland V."/>
            <person name="Riley M."/>
            <person name="Collado-Vides J."/>
            <person name="Glasner J.D."/>
            <person name="Rode C.K."/>
            <person name="Mayhew G.F."/>
            <person name="Gregor J."/>
            <person name="Davis N.W."/>
            <person name="Kirkpatrick H.A."/>
            <person name="Goeden M.A."/>
            <person name="Rose D.J."/>
            <person name="Mau B."/>
            <person name="Shao Y."/>
        </authorList>
    </citation>
    <scope>NUCLEOTIDE SEQUENCE [LARGE SCALE GENOMIC DNA]</scope>
    <source>
        <strain>K12 / MG1655 / ATCC 47076</strain>
    </source>
</reference>
<reference key="3">
    <citation type="journal article" date="2006" name="Mol. Syst. Biol.">
        <title>Highly accurate genome sequences of Escherichia coli K-12 strains MG1655 and W3110.</title>
        <authorList>
            <person name="Hayashi K."/>
            <person name="Morooka N."/>
            <person name="Yamamoto Y."/>
            <person name="Fujita K."/>
            <person name="Isono K."/>
            <person name="Choi S."/>
            <person name="Ohtsubo E."/>
            <person name="Baba T."/>
            <person name="Wanner B.L."/>
            <person name="Mori H."/>
            <person name="Horiuchi T."/>
        </authorList>
    </citation>
    <scope>NUCLEOTIDE SEQUENCE [LARGE SCALE GENOMIC DNA]</scope>
    <source>
        <strain>K12 / W3110 / ATCC 27325 / DSM 5911</strain>
    </source>
</reference>
<reference key="4">
    <citation type="submission" date="1995-05" db="EMBL/GenBank/DDBJ databases">
        <authorList>
            <person name="Shanmugam K.T."/>
        </authorList>
    </citation>
    <scope>NUCLEOTIDE SEQUENCE [GENOMIC DNA] OF 210-317</scope>
    <source>
        <strain>K12</strain>
    </source>
</reference>
<reference key="5">
    <citation type="unpublished observations" date="1995-12">
        <authorList>
            <person name="Robison K."/>
        </authorList>
    </citation>
    <scope>IDENTIFICATION</scope>
</reference>
<dbReference type="EMBL" id="U00096">
    <property type="protein sequence ID" value="AAC73855.2"/>
    <property type="molecule type" value="Genomic_DNA"/>
</dbReference>
<dbReference type="EMBL" id="AP009048">
    <property type="protein sequence ID" value="BAA35432.1"/>
    <property type="status" value="ALT_INIT"/>
    <property type="molecule type" value="Genomic_DNA"/>
</dbReference>
<dbReference type="EMBL" id="U27192">
    <property type="status" value="NOT_ANNOTATED_CDS"/>
    <property type="molecule type" value="Genomic_DNA"/>
</dbReference>
<dbReference type="PIR" id="H64812">
    <property type="entry name" value="H64812"/>
</dbReference>
<dbReference type="RefSeq" id="NP_415289.4">
    <property type="nucleotide sequence ID" value="NC_000913.3"/>
</dbReference>
<dbReference type="RefSeq" id="WP_001350493.1">
    <property type="nucleotide sequence ID" value="NZ_LN832404.1"/>
</dbReference>
<dbReference type="SMR" id="P52696"/>
<dbReference type="BioGRID" id="4261144">
    <property type="interactions" value="82"/>
</dbReference>
<dbReference type="FunCoup" id="P52696">
    <property type="interactions" value="32"/>
</dbReference>
<dbReference type="STRING" id="511145.b0768"/>
<dbReference type="PaxDb" id="511145-b0768"/>
<dbReference type="EnsemblBacteria" id="AAC73855">
    <property type="protein sequence ID" value="AAC73855"/>
    <property type="gene ID" value="b0768"/>
</dbReference>
<dbReference type="GeneID" id="944869"/>
<dbReference type="KEGG" id="ecj:JW5896"/>
<dbReference type="KEGG" id="eco:b0768"/>
<dbReference type="KEGG" id="ecoc:C3026_03895"/>
<dbReference type="PATRIC" id="fig|1411691.4.peg.1510"/>
<dbReference type="EchoBASE" id="EB3019"/>
<dbReference type="eggNOG" id="COG0583">
    <property type="taxonomic scope" value="Bacteria"/>
</dbReference>
<dbReference type="HOGENOM" id="CLU_039613_6_0_6"/>
<dbReference type="InParanoid" id="P52696"/>
<dbReference type="OMA" id="PWIAGCP"/>
<dbReference type="OrthoDB" id="8437302at2"/>
<dbReference type="PhylomeDB" id="P52696"/>
<dbReference type="BioCyc" id="EcoCyc:G6398-MONOMER"/>
<dbReference type="PRO" id="PR:P52696"/>
<dbReference type="Proteomes" id="UP000000625">
    <property type="component" value="Chromosome"/>
</dbReference>
<dbReference type="GO" id="GO:0005829">
    <property type="term" value="C:cytosol"/>
    <property type="evidence" value="ECO:0000318"/>
    <property type="project" value="GO_Central"/>
</dbReference>
<dbReference type="GO" id="GO:0003700">
    <property type="term" value="F:DNA-binding transcription factor activity"/>
    <property type="evidence" value="ECO:0007669"/>
    <property type="project" value="InterPro"/>
</dbReference>
<dbReference type="GO" id="GO:0043565">
    <property type="term" value="F:sequence-specific DNA binding"/>
    <property type="evidence" value="ECO:0000318"/>
    <property type="project" value="GO_Central"/>
</dbReference>
<dbReference type="GO" id="GO:0006355">
    <property type="term" value="P:regulation of DNA-templated transcription"/>
    <property type="evidence" value="ECO:0000318"/>
    <property type="project" value="GO_Central"/>
</dbReference>
<dbReference type="CDD" id="cd08440">
    <property type="entry name" value="PBP2_LTTR_like_4"/>
    <property type="match status" value="1"/>
</dbReference>
<dbReference type="FunFam" id="1.10.10.10:FF:000001">
    <property type="entry name" value="LysR family transcriptional regulator"/>
    <property type="match status" value="1"/>
</dbReference>
<dbReference type="Gene3D" id="3.40.190.290">
    <property type="match status" value="1"/>
</dbReference>
<dbReference type="Gene3D" id="1.10.10.10">
    <property type="entry name" value="Winged helix-like DNA-binding domain superfamily/Winged helix DNA-binding domain"/>
    <property type="match status" value="1"/>
</dbReference>
<dbReference type="InterPro" id="IPR050950">
    <property type="entry name" value="HTH-type_LysR_regulators"/>
</dbReference>
<dbReference type="InterPro" id="IPR005119">
    <property type="entry name" value="LysR_subst-bd"/>
</dbReference>
<dbReference type="InterPro" id="IPR000847">
    <property type="entry name" value="Tscrpt_reg_HTH_LysR"/>
</dbReference>
<dbReference type="InterPro" id="IPR036388">
    <property type="entry name" value="WH-like_DNA-bd_sf"/>
</dbReference>
<dbReference type="InterPro" id="IPR036390">
    <property type="entry name" value="WH_DNA-bd_sf"/>
</dbReference>
<dbReference type="PANTHER" id="PTHR30419">
    <property type="entry name" value="HTH-TYPE TRANSCRIPTIONAL REGULATOR YBHD"/>
    <property type="match status" value="1"/>
</dbReference>
<dbReference type="PANTHER" id="PTHR30419:SF30">
    <property type="entry name" value="LYSR FAMILY TRANSCRIPTIONAL REGULATOR"/>
    <property type="match status" value="1"/>
</dbReference>
<dbReference type="Pfam" id="PF00126">
    <property type="entry name" value="HTH_1"/>
    <property type="match status" value="1"/>
</dbReference>
<dbReference type="Pfam" id="PF03466">
    <property type="entry name" value="LysR_substrate"/>
    <property type="match status" value="1"/>
</dbReference>
<dbReference type="PRINTS" id="PR00039">
    <property type="entry name" value="HTHLYSR"/>
</dbReference>
<dbReference type="SUPFAM" id="SSF53850">
    <property type="entry name" value="Periplasmic binding protein-like II"/>
    <property type="match status" value="1"/>
</dbReference>
<dbReference type="SUPFAM" id="SSF46785">
    <property type="entry name" value="Winged helix' DNA-binding domain"/>
    <property type="match status" value="1"/>
</dbReference>
<dbReference type="PROSITE" id="PS50931">
    <property type="entry name" value="HTH_LYSR"/>
    <property type="match status" value="1"/>
</dbReference>
<keyword id="KW-0238">DNA-binding</keyword>
<keyword id="KW-1185">Reference proteome</keyword>
<keyword id="KW-0804">Transcription</keyword>
<keyword id="KW-0805">Transcription regulation</keyword>
<proteinExistence type="inferred from homology"/>
<protein>
    <recommendedName>
        <fullName>Uncharacterized HTH-type transcriptional regulator YbhD</fullName>
    </recommendedName>
</protein>